<protein>
    <recommendedName>
        <fullName>Protein SCAI</fullName>
    </recommendedName>
    <alternativeName>
        <fullName>Suppressor of cancer cell invasion protein</fullName>
    </alternativeName>
</protein>
<keyword id="KW-0025">Alternative splicing</keyword>
<keyword id="KW-0963">Cytoplasm</keyword>
<keyword id="KW-0472">Membrane</keyword>
<keyword id="KW-0539">Nucleus</keyword>
<keyword id="KW-0597">Phosphoprotein</keyword>
<keyword id="KW-1185">Reference proteome</keyword>
<keyword id="KW-0678">Repressor</keyword>
<keyword id="KW-0734">Signal transduction inhibitor</keyword>
<keyword id="KW-0804">Transcription</keyword>
<keyword id="KW-0805">Transcription regulation</keyword>
<keyword id="KW-0812">Transmembrane</keyword>
<keyword id="KW-1133">Transmembrane helix</keyword>
<comment type="function">
    <text evidence="3">Tumor suppressor which functions to suppress MRTFA-induced SRF transcriptional activity. May function in the RHOA-DIAPH1 signal transduction pathway and regulate cell migration through transcriptional regulation of ITGB1.</text>
</comment>
<comment type="subunit">
    <text evidence="3">Interacts with DIAPH1. Forms a nuclear ternary complex with MRTFA and SRF.</text>
</comment>
<comment type="subcellular location">
    <subcellularLocation>
        <location evidence="5">Membrane</location>
        <topology evidence="5">Single-pass membrane protein</topology>
    </subcellularLocation>
    <subcellularLocation>
        <location evidence="3">Nucleus</location>
    </subcellularLocation>
    <subcellularLocation>
        <location evidence="3">Cytoplasm</location>
    </subcellularLocation>
    <text>Nuclear localization is required for inhibition of MRTFA.</text>
</comment>
<comment type="alternative products">
    <event type="alternative splicing"/>
    <isoform>
        <id>Q8C8N2-1</id>
        <name>1</name>
        <sequence type="displayed"/>
    </isoform>
    <isoform>
        <id>Q8C8N2-2</id>
        <name>2</name>
        <sequence type="described" ref="VSP_015121 VSP_015122"/>
    </isoform>
</comment>
<comment type="tissue specificity">
    <text evidence="3">Expressed in most tissues tested with higher expression levels in brain, spleen and thymus.</text>
</comment>
<comment type="similarity">
    <text evidence="5">Belongs to the SCAI family.</text>
</comment>
<comment type="sequence caution" evidence="5">
    <conflict type="erroneous initiation">
        <sequence resource="EMBL-CDS" id="BAC32904"/>
    </conflict>
    <text>Truncated N-terminus.</text>
</comment>
<accession>Q8C8N2</accession>
<accession>A2RTF5</accession>
<accession>A3KGQ2</accession>
<accession>Q8C409</accession>
<accession>Q8C8K2</accession>
<gene>
    <name type="primary">Scai</name>
</gene>
<feature type="chain" id="PRO_0000089736" description="Protein SCAI">
    <location>
        <begin position="1"/>
        <end position="606"/>
    </location>
</feature>
<feature type="transmembrane region" description="Helical" evidence="1">
    <location>
        <begin position="472"/>
        <end position="492"/>
    </location>
</feature>
<feature type="region of interest" description="Necessary to inhibit MRTFA-induced SRF transcriptional activity">
    <location>
        <begin position="1"/>
        <end position="212"/>
    </location>
</feature>
<feature type="region of interest" description="Disordered" evidence="2">
    <location>
        <begin position="1"/>
        <end position="53"/>
    </location>
</feature>
<feature type="region of interest" description="Required for interaction with MRTFA" evidence="3">
    <location>
        <begin position="71"/>
        <end position="173"/>
    </location>
</feature>
<feature type="compositionally biased region" description="Polar residues" evidence="2">
    <location>
        <begin position="1"/>
        <end position="12"/>
    </location>
</feature>
<feature type="modified residue" description="Phosphotyrosine" evidence="6">
    <location>
        <position position="64"/>
    </location>
</feature>
<feature type="splice variant" id="VSP_015121" description="In isoform 2." evidence="4">
    <original>EPAD</original>
    <variation>VIIA</variation>
    <location>
        <begin position="322"/>
        <end position="325"/>
    </location>
</feature>
<feature type="splice variant" id="VSP_015122" description="In isoform 2." evidence="4">
    <location>
        <begin position="326"/>
        <end position="606"/>
    </location>
</feature>
<feature type="sequence conflict" description="In Ref. 1; BAC32081." evidence="5" ref="1">
    <original>T</original>
    <variation>A</variation>
    <location>
        <position position="58"/>
    </location>
</feature>
<name>SCAI_MOUSE</name>
<proteinExistence type="evidence at protein level"/>
<reference key="1">
    <citation type="journal article" date="2005" name="Science">
        <title>The transcriptional landscape of the mammalian genome.</title>
        <authorList>
            <person name="Carninci P."/>
            <person name="Kasukawa T."/>
            <person name="Katayama S."/>
            <person name="Gough J."/>
            <person name="Frith M.C."/>
            <person name="Maeda N."/>
            <person name="Oyama R."/>
            <person name="Ravasi T."/>
            <person name="Lenhard B."/>
            <person name="Wells C."/>
            <person name="Kodzius R."/>
            <person name="Shimokawa K."/>
            <person name="Bajic V.B."/>
            <person name="Brenner S.E."/>
            <person name="Batalov S."/>
            <person name="Forrest A.R."/>
            <person name="Zavolan M."/>
            <person name="Davis M.J."/>
            <person name="Wilming L.G."/>
            <person name="Aidinis V."/>
            <person name="Allen J.E."/>
            <person name="Ambesi-Impiombato A."/>
            <person name="Apweiler R."/>
            <person name="Aturaliya R.N."/>
            <person name="Bailey T.L."/>
            <person name="Bansal M."/>
            <person name="Baxter L."/>
            <person name="Beisel K.W."/>
            <person name="Bersano T."/>
            <person name="Bono H."/>
            <person name="Chalk A.M."/>
            <person name="Chiu K.P."/>
            <person name="Choudhary V."/>
            <person name="Christoffels A."/>
            <person name="Clutterbuck D.R."/>
            <person name="Crowe M.L."/>
            <person name="Dalla E."/>
            <person name="Dalrymple B.P."/>
            <person name="de Bono B."/>
            <person name="Della Gatta G."/>
            <person name="di Bernardo D."/>
            <person name="Down T."/>
            <person name="Engstrom P."/>
            <person name="Fagiolini M."/>
            <person name="Faulkner G."/>
            <person name="Fletcher C.F."/>
            <person name="Fukushima T."/>
            <person name="Furuno M."/>
            <person name="Futaki S."/>
            <person name="Gariboldi M."/>
            <person name="Georgii-Hemming P."/>
            <person name="Gingeras T.R."/>
            <person name="Gojobori T."/>
            <person name="Green R.E."/>
            <person name="Gustincich S."/>
            <person name="Harbers M."/>
            <person name="Hayashi Y."/>
            <person name="Hensch T.K."/>
            <person name="Hirokawa N."/>
            <person name="Hill D."/>
            <person name="Huminiecki L."/>
            <person name="Iacono M."/>
            <person name="Ikeo K."/>
            <person name="Iwama A."/>
            <person name="Ishikawa T."/>
            <person name="Jakt M."/>
            <person name="Kanapin A."/>
            <person name="Katoh M."/>
            <person name="Kawasawa Y."/>
            <person name="Kelso J."/>
            <person name="Kitamura H."/>
            <person name="Kitano H."/>
            <person name="Kollias G."/>
            <person name="Krishnan S.P."/>
            <person name="Kruger A."/>
            <person name="Kummerfeld S.K."/>
            <person name="Kurochkin I.V."/>
            <person name="Lareau L.F."/>
            <person name="Lazarevic D."/>
            <person name="Lipovich L."/>
            <person name="Liu J."/>
            <person name="Liuni S."/>
            <person name="McWilliam S."/>
            <person name="Madan Babu M."/>
            <person name="Madera M."/>
            <person name="Marchionni L."/>
            <person name="Matsuda H."/>
            <person name="Matsuzawa S."/>
            <person name="Miki H."/>
            <person name="Mignone F."/>
            <person name="Miyake S."/>
            <person name="Morris K."/>
            <person name="Mottagui-Tabar S."/>
            <person name="Mulder N."/>
            <person name="Nakano N."/>
            <person name="Nakauchi H."/>
            <person name="Ng P."/>
            <person name="Nilsson R."/>
            <person name="Nishiguchi S."/>
            <person name="Nishikawa S."/>
            <person name="Nori F."/>
            <person name="Ohara O."/>
            <person name="Okazaki Y."/>
            <person name="Orlando V."/>
            <person name="Pang K.C."/>
            <person name="Pavan W.J."/>
            <person name="Pavesi G."/>
            <person name="Pesole G."/>
            <person name="Petrovsky N."/>
            <person name="Piazza S."/>
            <person name="Reed J."/>
            <person name="Reid J.F."/>
            <person name="Ring B.Z."/>
            <person name="Ringwald M."/>
            <person name="Rost B."/>
            <person name="Ruan Y."/>
            <person name="Salzberg S.L."/>
            <person name="Sandelin A."/>
            <person name="Schneider C."/>
            <person name="Schoenbach C."/>
            <person name="Sekiguchi K."/>
            <person name="Semple C.A."/>
            <person name="Seno S."/>
            <person name="Sessa L."/>
            <person name="Sheng Y."/>
            <person name="Shibata Y."/>
            <person name="Shimada H."/>
            <person name="Shimada K."/>
            <person name="Silva D."/>
            <person name="Sinclair B."/>
            <person name="Sperling S."/>
            <person name="Stupka E."/>
            <person name="Sugiura K."/>
            <person name="Sultana R."/>
            <person name="Takenaka Y."/>
            <person name="Taki K."/>
            <person name="Tammoja K."/>
            <person name="Tan S.L."/>
            <person name="Tang S."/>
            <person name="Taylor M.S."/>
            <person name="Tegner J."/>
            <person name="Teichmann S.A."/>
            <person name="Ueda H.R."/>
            <person name="van Nimwegen E."/>
            <person name="Verardo R."/>
            <person name="Wei C.L."/>
            <person name="Yagi K."/>
            <person name="Yamanishi H."/>
            <person name="Zabarovsky E."/>
            <person name="Zhu S."/>
            <person name="Zimmer A."/>
            <person name="Hide W."/>
            <person name="Bult C."/>
            <person name="Grimmond S.M."/>
            <person name="Teasdale R.D."/>
            <person name="Liu E.T."/>
            <person name="Brusic V."/>
            <person name="Quackenbush J."/>
            <person name="Wahlestedt C."/>
            <person name="Mattick J.S."/>
            <person name="Hume D.A."/>
            <person name="Kai C."/>
            <person name="Sasaki D."/>
            <person name="Tomaru Y."/>
            <person name="Fukuda S."/>
            <person name="Kanamori-Katayama M."/>
            <person name="Suzuki M."/>
            <person name="Aoki J."/>
            <person name="Arakawa T."/>
            <person name="Iida J."/>
            <person name="Imamura K."/>
            <person name="Itoh M."/>
            <person name="Kato T."/>
            <person name="Kawaji H."/>
            <person name="Kawagashira N."/>
            <person name="Kawashima T."/>
            <person name="Kojima M."/>
            <person name="Kondo S."/>
            <person name="Konno H."/>
            <person name="Nakano K."/>
            <person name="Ninomiya N."/>
            <person name="Nishio T."/>
            <person name="Okada M."/>
            <person name="Plessy C."/>
            <person name="Shibata K."/>
            <person name="Shiraki T."/>
            <person name="Suzuki S."/>
            <person name="Tagami M."/>
            <person name="Waki K."/>
            <person name="Watahiki A."/>
            <person name="Okamura-Oho Y."/>
            <person name="Suzuki H."/>
            <person name="Kawai J."/>
            <person name="Hayashizaki Y."/>
        </authorList>
    </citation>
    <scope>NUCLEOTIDE SEQUENCE [LARGE SCALE MRNA] (ISOFORMS 1 AND 2)</scope>
    <source>
        <strain>C57BL/6J</strain>
        <tissue>Cerebellum</tissue>
        <tissue>Hippocampus</tissue>
        <tissue>Medulla oblongata</tissue>
        <tissue>Retina</tissue>
    </source>
</reference>
<reference key="2">
    <citation type="journal article" date="2009" name="PLoS Biol.">
        <title>Lineage-specific biology revealed by a finished genome assembly of the mouse.</title>
        <authorList>
            <person name="Church D.M."/>
            <person name="Goodstadt L."/>
            <person name="Hillier L.W."/>
            <person name="Zody M.C."/>
            <person name="Goldstein S."/>
            <person name="She X."/>
            <person name="Bult C.J."/>
            <person name="Agarwala R."/>
            <person name="Cherry J.L."/>
            <person name="DiCuccio M."/>
            <person name="Hlavina W."/>
            <person name="Kapustin Y."/>
            <person name="Meric P."/>
            <person name="Maglott D."/>
            <person name="Birtle Z."/>
            <person name="Marques A.C."/>
            <person name="Graves T."/>
            <person name="Zhou S."/>
            <person name="Teague B."/>
            <person name="Potamousis K."/>
            <person name="Churas C."/>
            <person name="Place M."/>
            <person name="Herschleb J."/>
            <person name="Runnheim R."/>
            <person name="Forrest D."/>
            <person name="Amos-Landgraf J."/>
            <person name="Schwartz D.C."/>
            <person name="Cheng Z."/>
            <person name="Lindblad-Toh K."/>
            <person name="Eichler E.E."/>
            <person name="Ponting C.P."/>
        </authorList>
    </citation>
    <scope>NUCLEOTIDE SEQUENCE [LARGE SCALE GENOMIC DNA]</scope>
    <source>
        <strain>C57BL/6J</strain>
    </source>
</reference>
<reference key="3">
    <citation type="submission" date="2005-07" db="EMBL/GenBank/DDBJ databases">
        <authorList>
            <person name="Mural R.J."/>
            <person name="Adams M.D."/>
            <person name="Myers E.W."/>
            <person name="Smith H.O."/>
            <person name="Venter J.C."/>
        </authorList>
    </citation>
    <scope>NUCLEOTIDE SEQUENCE [LARGE SCALE GENOMIC DNA]</scope>
</reference>
<reference key="4">
    <citation type="journal article" date="2004" name="Genome Res.">
        <title>The status, quality, and expansion of the NIH full-length cDNA project: the Mammalian Gene Collection (MGC).</title>
        <authorList>
            <consortium name="The MGC Project Team"/>
        </authorList>
    </citation>
    <scope>NUCLEOTIDE SEQUENCE [LARGE SCALE MRNA] (ISOFORM 1)</scope>
    <source>
        <tissue>Brain</tissue>
    </source>
</reference>
<reference key="5">
    <citation type="journal article" date="2008" name="J. Proteome Res.">
        <title>Large-scale identification and evolution indexing of tyrosine phosphorylation sites from murine brain.</title>
        <authorList>
            <person name="Ballif B.A."/>
            <person name="Carey G.R."/>
            <person name="Sunyaev S.R."/>
            <person name="Gygi S.P."/>
        </authorList>
    </citation>
    <scope>PHOSPHORYLATION [LARGE SCALE ANALYSIS] AT TYR-64</scope>
    <scope>IDENTIFICATION BY MASS SPECTROMETRY [LARGE SCALE ANALYSIS]</scope>
    <source>
        <tissue>Brain</tissue>
    </source>
</reference>
<reference key="6">
    <citation type="journal article" date="2009" name="Nat. Cell Biol.">
        <title>SCAI acts as a suppressor of cancer cell invasion through the transcriptional control of beta1-integrin.</title>
        <authorList>
            <person name="Brandt D.T."/>
            <person name="Baarlink C."/>
            <person name="Kitzing T.M."/>
            <person name="Kremmer E."/>
            <person name="Ivaska J."/>
            <person name="Nollau P."/>
            <person name="Grosse R."/>
        </authorList>
    </citation>
    <scope>FUNCTION</scope>
    <scope>INTERACTION WITH DIAPH1; MRTFA AND SRF</scope>
    <scope>SUBCELLULAR LOCATION</scope>
    <scope>TISSUE SPECIFICITY</scope>
</reference>
<reference key="7">
    <citation type="journal article" date="2010" name="Cell">
        <title>A tissue-specific atlas of mouse protein phosphorylation and expression.</title>
        <authorList>
            <person name="Huttlin E.L."/>
            <person name="Jedrychowski M.P."/>
            <person name="Elias J.E."/>
            <person name="Goswami T."/>
            <person name="Rad R."/>
            <person name="Beausoleil S.A."/>
            <person name="Villen J."/>
            <person name="Haas W."/>
            <person name="Sowa M.E."/>
            <person name="Gygi S.P."/>
        </authorList>
    </citation>
    <scope>IDENTIFICATION BY MASS SPECTROMETRY [LARGE SCALE ANALYSIS]</scope>
    <source>
        <tissue>Brain</tissue>
    </source>
</reference>
<sequence>MVRGARQSQQPRSRLAPRLSGTVEKPPRKRKSRTEFTLKETMSSGGAEDDIPQGERKTVTDFCYLLDKSKQLFNGLRDLPQYGQKQWQSYFGRTFDVYTKLWKFQQQHRQVLDNRYGLKRWQIGEIASKIGQLYYHYYLRTSETSYLNEAFSFYSAIRQRSYYSQVNKEDRPELVVKKLRYYARFIVVCLLLNKMDVVKDLVKELSDEIEDYTHRFNTEDQVEWNLVLQEVAAFIEADPVMVLNDDNTIVITSNRLAETGAPLLEQGMIVGQLSLADALIIGNCNNQVKFSELTVDMFRMLQALEREPMNLASQMNKPGIQEPADKPTRRENPHKYLLYKPTFSQLYTFLAASFKELPANSVLLIYLSATGVFPTGRSDGEGPYDFGGVLTNSNRDIINGDAIHKRNQSHKEMHCLHPGDLYPFTRKPLFIVVDSSNSVAYKNFTNLFGQPLVCLLSPTAYPKALQDQSQRGSLFTLFLNNPLMAFLFVSGLSSMRRGLWEKCQEYLRKINRDIAQLLTHSRSIDQAFLQFFGDEFLRLLLTRFVFCSATMRMHKAFRETRNYPESYPQLPRDETVENPHLQKHILELASILDVRNIFFENSMDDY</sequence>
<evidence type="ECO:0000255" key="1"/>
<evidence type="ECO:0000256" key="2">
    <source>
        <dbReference type="SAM" id="MobiDB-lite"/>
    </source>
</evidence>
<evidence type="ECO:0000269" key="3">
    <source>
    </source>
</evidence>
<evidence type="ECO:0000303" key="4">
    <source>
    </source>
</evidence>
<evidence type="ECO:0000305" key="5"/>
<evidence type="ECO:0007744" key="6">
    <source>
    </source>
</evidence>
<dbReference type="EMBL" id="AK044772">
    <property type="protein sequence ID" value="BAC32081.1"/>
    <property type="molecule type" value="mRNA"/>
</dbReference>
<dbReference type="EMBL" id="AK046875">
    <property type="protein sequence ID" value="BAC32904.1"/>
    <property type="status" value="ALT_INIT"/>
    <property type="molecule type" value="mRNA"/>
</dbReference>
<dbReference type="EMBL" id="AK083280">
    <property type="protein sequence ID" value="BAC38841.1"/>
    <property type="molecule type" value="mRNA"/>
</dbReference>
<dbReference type="EMBL" id="AL844588">
    <property type="status" value="NOT_ANNOTATED_CDS"/>
    <property type="molecule type" value="Genomic_DNA"/>
</dbReference>
<dbReference type="EMBL" id="AL845350">
    <property type="status" value="NOT_ANNOTATED_CDS"/>
    <property type="molecule type" value="Genomic_DNA"/>
</dbReference>
<dbReference type="EMBL" id="AL928639">
    <property type="status" value="NOT_ANNOTATED_CDS"/>
    <property type="molecule type" value="Genomic_DNA"/>
</dbReference>
<dbReference type="EMBL" id="CH466519">
    <property type="protein sequence ID" value="EDL26843.1"/>
    <property type="molecule type" value="Genomic_DNA"/>
</dbReference>
<dbReference type="EMBL" id="BC132485">
    <property type="protein sequence ID" value="AAI32486.1"/>
    <property type="molecule type" value="mRNA"/>
</dbReference>
<dbReference type="CCDS" id="CCDS38121.1">
    <molecule id="Q8C8N2-1"/>
</dbReference>
<dbReference type="RefSeq" id="NP_848893.2">
    <molecule id="Q8C8N2-1"/>
    <property type="nucleotide sequence ID" value="NM_178778.4"/>
</dbReference>
<dbReference type="BioGRID" id="235895">
    <property type="interactions" value="19"/>
</dbReference>
<dbReference type="FunCoup" id="Q8C8N2">
    <property type="interactions" value="4006"/>
</dbReference>
<dbReference type="IntAct" id="Q8C8N2">
    <property type="interactions" value="15"/>
</dbReference>
<dbReference type="MINT" id="Q8C8N2"/>
<dbReference type="STRING" id="10090.ENSMUSP00000037194"/>
<dbReference type="GlyGen" id="Q8C8N2">
    <property type="glycosylation" value="1 site, 1 O-linked glycan (1 site)"/>
</dbReference>
<dbReference type="iPTMnet" id="Q8C8N2"/>
<dbReference type="PhosphoSitePlus" id="Q8C8N2"/>
<dbReference type="SwissPalm" id="Q8C8N2"/>
<dbReference type="PaxDb" id="10090-ENSMUSP00000037194"/>
<dbReference type="PeptideAtlas" id="Q8C8N2"/>
<dbReference type="ProteomicsDB" id="256925">
    <molecule id="Q8C8N2-1"/>
</dbReference>
<dbReference type="ProteomicsDB" id="256926">
    <molecule id="Q8C8N2-2"/>
</dbReference>
<dbReference type="Pumba" id="Q8C8N2"/>
<dbReference type="Antibodypedia" id="7729">
    <property type="antibodies" value="36 antibodies from 15 providers"/>
</dbReference>
<dbReference type="Ensembl" id="ENSMUST00000038874.12">
    <molecule id="Q8C8N2-1"/>
    <property type="protein sequence ID" value="ENSMUSP00000037194.6"/>
    <property type="gene ID" value="ENSMUSG00000035236.18"/>
</dbReference>
<dbReference type="GeneID" id="320271"/>
<dbReference type="KEGG" id="mmu:320271"/>
<dbReference type="UCSC" id="uc008jof.1">
    <molecule id="Q8C8N2-1"/>
    <property type="organism name" value="mouse"/>
</dbReference>
<dbReference type="UCSC" id="uc008joh.1">
    <molecule id="Q8C8N2-2"/>
    <property type="organism name" value="mouse"/>
</dbReference>
<dbReference type="AGR" id="MGI:2443716"/>
<dbReference type="CTD" id="286205"/>
<dbReference type="MGI" id="MGI:2443716">
    <property type="gene designation" value="Scai"/>
</dbReference>
<dbReference type="VEuPathDB" id="HostDB:ENSMUSG00000035236"/>
<dbReference type="eggNOG" id="ENOG502QPT4">
    <property type="taxonomic scope" value="Eukaryota"/>
</dbReference>
<dbReference type="GeneTree" id="ENSGT00390000009566"/>
<dbReference type="HOGENOM" id="CLU_020095_2_1_1"/>
<dbReference type="InParanoid" id="Q8C8N2"/>
<dbReference type="OMA" id="HCIHPGD"/>
<dbReference type="OrthoDB" id="525027at2759"/>
<dbReference type="PhylomeDB" id="Q8C8N2"/>
<dbReference type="TreeFam" id="TF324872"/>
<dbReference type="Reactome" id="R-MMU-5663220">
    <property type="pathway name" value="RHO GTPases Activate Formins"/>
</dbReference>
<dbReference type="BioGRID-ORCS" id="320271">
    <property type="hits" value="3 hits in 76 CRISPR screens"/>
</dbReference>
<dbReference type="CD-CODE" id="CE726F99">
    <property type="entry name" value="Postsynaptic density"/>
</dbReference>
<dbReference type="ChiTaRS" id="Scai">
    <property type="organism name" value="mouse"/>
</dbReference>
<dbReference type="PRO" id="PR:Q8C8N2"/>
<dbReference type="Proteomes" id="UP000000589">
    <property type="component" value="Chromosome 2"/>
</dbReference>
<dbReference type="RNAct" id="Q8C8N2">
    <property type="molecule type" value="protein"/>
</dbReference>
<dbReference type="Bgee" id="ENSMUSG00000035236">
    <property type="expression patterns" value="Expressed in manus and 226 other cell types or tissues"/>
</dbReference>
<dbReference type="ExpressionAtlas" id="Q8C8N2">
    <property type="expression patterns" value="baseline and differential"/>
</dbReference>
<dbReference type="GO" id="GO:0005737">
    <property type="term" value="C:cytoplasm"/>
    <property type="evidence" value="ECO:0000314"/>
    <property type="project" value="UniProtKB"/>
</dbReference>
<dbReference type="GO" id="GO:0031965">
    <property type="term" value="C:nuclear membrane"/>
    <property type="evidence" value="ECO:0007669"/>
    <property type="project" value="Ensembl"/>
</dbReference>
<dbReference type="GO" id="GO:0005654">
    <property type="term" value="C:nucleoplasm"/>
    <property type="evidence" value="ECO:0007669"/>
    <property type="project" value="Ensembl"/>
</dbReference>
<dbReference type="GO" id="GO:0005634">
    <property type="term" value="C:nucleus"/>
    <property type="evidence" value="ECO:0000314"/>
    <property type="project" value="UniProtKB"/>
</dbReference>
<dbReference type="GO" id="GO:0003714">
    <property type="term" value="F:transcription corepressor activity"/>
    <property type="evidence" value="ECO:0000314"/>
    <property type="project" value="UniProtKB"/>
</dbReference>
<dbReference type="GO" id="GO:0006351">
    <property type="term" value="P:DNA-templated transcription"/>
    <property type="evidence" value="ECO:0007669"/>
    <property type="project" value="InterPro"/>
</dbReference>
<dbReference type="GO" id="GO:0030336">
    <property type="term" value="P:negative regulation of cell migration"/>
    <property type="evidence" value="ECO:0000316"/>
    <property type="project" value="UniProtKB"/>
</dbReference>
<dbReference type="GO" id="GO:0035024">
    <property type="term" value="P:negative regulation of Rho protein signal transduction"/>
    <property type="evidence" value="ECO:0000314"/>
    <property type="project" value="UniProtKB"/>
</dbReference>
<dbReference type="InterPro" id="IPR022709">
    <property type="entry name" value="SCAI"/>
</dbReference>
<dbReference type="InterPro" id="IPR016607">
    <property type="entry name" value="SCAI_metazoan/Viridiplantae"/>
</dbReference>
<dbReference type="PANTHER" id="PTHR21243">
    <property type="entry name" value="PROTEIN SCAI"/>
    <property type="match status" value="1"/>
</dbReference>
<dbReference type="Pfam" id="PF12070">
    <property type="entry name" value="SCAI"/>
    <property type="match status" value="1"/>
</dbReference>
<dbReference type="PIRSF" id="PIRSF013022">
    <property type="entry name" value="UCP013022"/>
    <property type="match status" value="1"/>
</dbReference>
<organism>
    <name type="scientific">Mus musculus</name>
    <name type="common">Mouse</name>
    <dbReference type="NCBI Taxonomy" id="10090"/>
    <lineage>
        <taxon>Eukaryota</taxon>
        <taxon>Metazoa</taxon>
        <taxon>Chordata</taxon>
        <taxon>Craniata</taxon>
        <taxon>Vertebrata</taxon>
        <taxon>Euteleostomi</taxon>
        <taxon>Mammalia</taxon>
        <taxon>Eutheria</taxon>
        <taxon>Euarchontoglires</taxon>
        <taxon>Glires</taxon>
        <taxon>Rodentia</taxon>
        <taxon>Myomorpha</taxon>
        <taxon>Muroidea</taxon>
        <taxon>Muridae</taxon>
        <taxon>Murinae</taxon>
        <taxon>Mus</taxon>
        <taxon>Mus</taxon>
    </lineage>
</organism>